<organism>
    <name type="scientific">Vibrio cholerae serotype O1 (strain ATCC 39315 / El Tor Inaba N16961)</name>
    <dbReference type="NCBI Taxonomy" id="243277"/>
    <lineage>
        <taxon>Bacteria</taxon>
        <taxon>Pseudomonadati</taxon>
        <taxon>Pseudomonadota</taxon>
        <taxon>Gammaproteobacteria</taxon>
        <taxon>Vibrionales</taxon>
        <taxon>Vibrionaceae</taxon>
        <taxon>Vibrio</taxon>
    </lineage>
</organism>
<keyword id="KW-0004">4Fe-4S</keyword>
<keyword id="KW-0408">Iron</keyword>
<keyword id="KW-0411">Iron-sulfur</keyword>
<keyword id="KW-0414">Isoprene biosynthesis</keyword>
<keyword id="KW-0479">Metal-binding</keyword>
<keyword id="KW-0560">Oxidoreductase</keyword>
<keyword id="KW-1185">Reference proteome</keyword>
<reference key="1">
    <citation type="journal article" date="2000" name="Nature">
        <title>DNA sequence of both chromosomes of the cholera pathogen Vibrio cholerae.</title>
        <authorList>
            <person name="Heidelberg J.F."/>
            <person name="Eisen J.A."/>
            <person name="Nelson W.C."/>
            <person name="Clayton R.A."/>
            <person name="Gwinn M.L."/>
            <person name="Dodson R.J."/>
            <person name="Haft D.H."/>
            <person name="Hickey E.K."/>
            <person name="Peterson J.D."/>
            <person name="Umayam L.A."/>
            <person name="Gill S.R."/>
            <person name="Nelson K.E."/>
            <person name="Read T.D."/>
            <person name="Tettelin H."/>
            <person name="Richardson D.L."/>
            <person name="Ermolaeva M.D."/>
            <person name="Vamathevan J.J."/>
            <person name="Bass S."/>
            <person name="Qin H."/>
            <person name="Dragoi I."/>
            <person name="Sellers P."/>
            <person name="McDonald L.A."/>
            <person name="Utterback T.R."/>
            <person name="Fleischmann R.D."/>
            <person name="Nierman W.C."/>
            <person name="White O."/>
            <person name="Salzberg S.L."/>
            <person name="Smith H.O."/>
            <person name="Colwell R.R."/>
            <person name="Mekalanos J.J."/>
            <person name="Venter J.C."/>
            <person name="Fraser C.M."/>
        </authorList>
    </citation>
    <scope>NUCLEOTIDE SEQUENCE [LARGE SCALE GENOMIC DNA]</scope>
    <source>
        <strain>ATCC 39315 / El Tor Inaba N16961</strain>
    </source>
</reference>
<gene>
    <name evidence="1" type="primary">ispH</name>
    <name type="synonym">lytB</name>
    <name type="ordered locus">VC_0685</name>
</gene>
<sequence length="316" mass="35156">MKILLANPRGFCAGVDRAISIVERALELYQPPIYVRHEVVHNRFVVEGLKQRGARFVEELNEVPDDNIVIFSAHGVSQAVRQEAKERSLTVFDATCPLVTKVHMEVARASRKHMEVVLIGHAGHPEVEGTMGQYASDTGGMYLVEKPEDVVSLQAKVKDPSNLHYVSQTTLSVDETADVIDELRRVFPKIQGPRKDDICYATQNRQDAVRILAEQVDVMVVVGSKNSSNSTRLKELAEKLGTPGYLIDCPQDIDPEWFVDAQLIGVTAGASAPEELVNQILDRIKELGATSVEEVLGREENMFFEVPKELQIKQVD</sequence>
<comment type="function">
    <text evidence="1">Catalyzes the conversion of 1-hydroxy-2-methyl-2-(E)-butenyl 4-diphosphate (HMBPP) into a mixture of isopentenyl diphosphate (IPP) and dimethylallyl diphosphate (DMAPP). Acts in the terminal step of the DOXP/MEP pathway for isoprenoid precursor biosynthesis.</text>
</comment>
<comment type="catalytic activity">
    <reaction evidence="1">
        <text>isopentenyl diphosphate + 2 oxidized [2Fe-2S]-[ferredoxin] + H2O = (2E)-4-hydroxy-3-methylbut-2-enyl diphosphate + 2 reduced [2Fe-2S]-[ferredoxin] + 2 H(+)</text>
        <dbReference type="Rhea" id="RHEA:24488"/>
        <dbReference type="Rhea" id="RHEA-COMP:10000"/>
        <dbReference type="Rhea" id="RHEA-COMP:10001"/>
        <dbReference type="ChEBI" id="CHEBI:15377"/>
        <dbReference type="ChEBI" id="CHEBI:15378"/>
        <dbReference type="ChEBI" id="CHEBI:33737"/>
        <dbReference type="ChEBI" id="CHEBI:33738"/>
        <dbReference type="ChEBI" id="CHEBI:128753"/>
        <dbReference type="ChEBI" id="CHEBI:128769"/>
        <dbReference type="EC" id="1.17.7.4"/>
    </reaction>
</comment>
<comment type="catalytic activity">
    <reaction evidence="1">
        <text>dimethylallyl diphosphate + 2 oxidized [2Fe-2S]-[ferredoxin] + H2O = (2E)-4-hydroxy-3-methylbut-2-enyl diphosphate + 2 reduced [2Fe-2S]-[ferredoxin] + 2 H(+)</text>
        <dbReference type="Rhea" id="RHEA:24825"/>
        <dbReference type="Rhea" id="RHEA-COMP:10000"/>
        <dbReference type="Rhea" id="RHEA-COMP:10001"/>
        <dbReference type="ChEBI" id="CHEBI:15377"/>
        <dbReference type="ChEBI" id="CHEBI:15378"/>
        <dbReference type="ChEBI" id="CHEBI:33737"/>
        <dbReference type="ChEBI" id="CHEBI:33738"/>
        <dbReference type="ChEBI" id="CHEBI:57623"/>
        <dbReference type="ChEBI" id="CHEBI:128753"/>
        <dbReference type="EC" id="1.17.7.4"/>
    </reaction>
</comment>
<comment type="cofactor">
    <cofactor evidence="1">
        <name>[4Fe-4S] cluster</name>
        <dbReference type="ChEBI" id="CHEBI:49883"/>
    </cofactor>
    <text evidence="1">Binds 1 [4Fe-4S] cluster per subunit.</text>
</comment>
<comment type="pathway">
    <text evidence="1">Isoprenoid biosynthesis; dimethylallyl diphosphate biosynthesis; dimethylallyl diphosphate from (2E)-4-hydroxy-3-methylbutenyl diphosphate: step 1/1.</text>
</comment>
<comment type="pathway">
    <text evidence="1">Isoprenoid biosynthesis; isopentenyl diphosphate biosynthesis via DXP pathway; isopentenyl diphosphate from 1-deoxy-D-xylulose 5-phosphate: step 6/6.</text>
</comment>
<comment type="similarity">
    <text evidence="1">Belongs to the IspH family.</text>
</comment>
<comment type="sequence caution" evidence="2">
    <conflict type="erroneous initiation">
        <sequence resource="EMBL-CDS" id="AAF93850"/>
    </conflict>
</comment>
<protein>
    <recommendedName>
        <fullName evidence="1">4-hydroxy-3-methylbut-2-enyl diphosphate reductase</fullName>
        <shortName evidence="1">HMBPP reductase</shortName>
        <ecNumber evidence="1">1.17.7.4</ecNumber>
    </recommendedName>
</protein>
<accession>Q9KU44</accession>
<evidence type="ECO:0000255" key="1">
    <source>
        <dbReference type="HAMAP-Rule" id="MF_00191"/>
    </source>
</evidence>
<evidence type="ECO:0000305" key="2"/>
<name>ISPH_VIBCH</name>
<feature type="chain" id="PRO_0000128889" description="4-hydroxy-3-methylbut-2-enyl diphosphate reductase">
    <location>
        <begin position="1"/>
        <end position="316"/>
    </location>
</feature>
<feature type="active site" description="Proton donor" evidence="1">
    <location>
        <position position="126"/>
    </location>
</feature>
<feature type="binding site" evidence="1">
    <location>
        <position position="12"/>
    </location>
    <ligand>
        <name>[4Fe-4S] cluster</name>
        <dbReference type="ChEBI" id="CHEBI:49883"/>
    </ligand>
</feature>
<feature type="binding site" evidence="1">
    <location>
        <position position="41"/>
    </location>
    <ligand>
        <name>(2E)-4-hydroxy-3-methylbut-2-enyl diphosphate</name>
        <dbReference type="ChEBI" id="CHEBI:128753"/>
    </ligand>
</feature>
<feature type="binding site" evidence="1">
    <location>
        <position position="41"/>
    </location>
    <ligand>
        <name>dimethylallyl diphosphate</name>
        <dbReference type="ChEBI" id="CHEBI:57623"/>
    </ligand>
</feature>
<feature type="binding site" evidence="1">
    <location>
        <position position="41"/>
    </location>
    <ligand>
        <name>isopentenyl diphosphate</name>
        <dbReference type="ChEBI" id="CHEBI:128769"/>
    </ligand>
</feature>
<feature type="binding site" evidence="1">
    <location>
        <position position="74"/>
    </location>
    <ligand>
        <name>(2E)-4-hydroxy-3-methylbut-2-enyl diphosphate</name>
        <dbReference type="ChEBI" id="CHEBI:128753"/>
    </ligand>
</feature>
<feature type="binding site" evidence="1">
    <location>
        <position position="74"/>
    </location>
    <ligand>
        <name>dimethylallyl diphosphate</name>
        <dbReference type="ChEBI" id="CHEBI:57623"/>
    </ligand>
</feature>
<feature type="binding site" evidence="1">
    <location>
        <position position="74"/>
    </location>
    <ligand>
        <name>isopentenyl diphosphate</name>
        <dbReference type="ChEBI" id="CHEBI:128769"/>
    </ligand>
</feature>
<feature type="binding site" evidence="1">
    <location>
        <position position="96"/>
    </location>
    <ligand>
        <name>[4Fe-4S] cluster</name>
        <dbReference type="ChEBI" id="CHEBI:49883"/>
    </ligand>
</feature>
<feature type="binding site" evidence="1">
    <location>
        <position position="124"/>
    </location>
    <ligand>
        <name>(2E)-4-hydroxy-3-methylbut-2-enyl diphosphate</name>
        <dbReference type="ChEBI" id="CHEBI:128753"/>
    </ligand>
</feature>
<feature type="binding site" evidence="1">
    <location>
        <position position="124"/>
    </location>
    <ligand>
        <name>dimethylallyl diphosphate</name>
        <dbReference type="ChEBI" id="CHEBI:57623"/>
    </ligand>
</feature>
<feature type="binding site" evidence="1">
    <location>
        <position position="124"/>
    </location>
    <ligand>
        <name>isopentenyl diphosphate</name>
        <dbReference type="ChEBI" id="CHEBI:128769"/>
    </ligand>
</feature>
<feature type="binding site" evidence="1">
    <location>
        <position position="169"/>
    </location>
    <ligand>
        <name>(2E)-4-hydroxy-3-methylbut-2-enyl diphosphate</name>
        <dbReference type="ChEBI" id="CHEBI:128753"/>
    </ligand>
</feature>
<feature type="binding site" evidence="1">
    <location>
        <position position="199"/>
    </location>
    <ligand>
        <name>[4Fe-4S] cluster</name>
        <dbReference type="ChEBI" id="CHEBI:49883"/>
    </ligand>
</feature>
<feature type="binding site" evidence="1">
    <location>
        <position position="227"/>
    </location>
    <ligand>
        <name>(2E)-4-hydroxy-3-methylbut-2-enyl diphosphate</name>
        <dbReference type="ChEBI" id="CHEBI:128753"/>
    </ligand>
</feature>
<feature type="binding site" evidence="1">
    <location>
        <position position="227"/>
    </location>
    <ligand>
        <name>dimethylallyl diphosphate</name>
        <dbReference type="ChEBI" id="CHEBI:57623"/>
    </ligand>
</feature>
<feature type="binding site" evidence="1">
    <location>
        <position position="227"/>
    </location>
    <ligand>
        <name>isopentenyl diphosphate</name>
        <dbReference type="ChEBI" id="CHEBI:128769"/>
    </ligand>
</feature>
<feature type="binding site" evidence="1">
    <location>
        <position position="228"/>
    </location>
    <ligand>
        <name>(2E)-4-hydroxy-3-methylbut-2-enyl diphosphate</name>
        <dbReference type="ChEBI" id="CHEBI:128753"/>
    </ligand>
</feature>
<feature type="binding site" evidence="1">
    <location>
        <position position="228"/>
    </location>
    <ligand>
        <name>dimethylallyl diphosphate</name>
        <dbReference type="ChEBI" id="CHEBI:57623"/>
    </ligand>
</feature>
<feature type="binding site" evidence="1">
    <location>
        <position position="228"/>
    </location>
    <ligand>
        <name>isopentenyl diphosphate</name>
        <dbReference type="ChEBI" id="CHEBI:128769"/>
    </ligand>
</feature>
<feature type="binding site" evidence="1">
    <location>
        <position position="229"/>
    </location>
    <ligand>
        <name>(2E)-4-hydroxy-3-methylbut-2-enyl diphosphate</name>
        <dbReference type="ChEBI" id="CHEBI:128753"/>
    </ligand>
</feature>
<feature type="binding site" evidence="1">
    <location>
        <position position="229"/>
    </location>
    <ligand>
        <name>dimethylallyl diphosphate</name>
        <dbReference type="ChEBI" id="CHEBI:57623"/>
    </ligand>
</feature>
<feature type="binding site" evidence="1">
    <location>
        <position position="229"/>
    </location>
    <ligand>
        <name>isopentenyl diphosphate</name>
        <dbReference type="ChEBI" id="CHEBI:128769"/>
    </ligand>
</feature>
<feature type="binding site" evidence="1">
    <location>
        <position position="271"/>
    </location>
    <ligand>
        <name>(2E)-4-hydroxy-3-methylbut-2-enyl diphosphate</name>
        <dbReference type="ChEBI" id="CHEBI:128753"/>
    </ligand>
</feature>
<feature type="binding site" evidence="1">
    <location>
        <position position="271"/>
    </location>
    <ligand>
        <name>dimethylallyl diphosphate</name>
        <dbReference type="ChEBI" id="CHEBI:57623"/>
    </ligand>
</feature>
<feature type="binding site" evidence="1">
    <location>
        <position position="271"/>
    </location>
    <ligand>
        <name>isopentenyl diphosphate</name>
        <dbReference type="ChEBI" id="CHEBI:128769"/>
    </ligand>
</feature>
<proteinExistence type="inferred from homology"/>
<dbReference type="EC" id="1.17.7.4" evidence="1"/>
<dbReference type="EMBL" id="AE003852">
    <property type="protein sequence ID" value="AAF93850.1"/>
    <property type="status" value="ALT_INIT"/>
    <property type="molecule type" value="Genomic_DNA"/>
</dbReference>
<dbReference type="PIR" id="G82293">
    <property type="entry name" value="G82293"/>
</dbReference>
<dbReference type="RefSeq" id="NP_230334.2">
    <property type="nucleotide sequence ID" value="NC_002505.1"/>
</dbReference>
<dbReference type="SMR" id="Q9KU44"/>
<dbReference type="STRING" id="243277.VC_0685"/>
<dbReference type="DNASU" id="2615474"/>
<dbReference type="EnsemblBacteria" id="AAF93850">
    <property type="protein sequence ID" value="AAF93850"/>
    <property type="gene ID" value="VC_0685"/>
</dbReference>
<dbReference type="KEGG" id="vch:VC_0685"/>
<dbReference type="PATRIC" id="fig|243277.26.peg.657"/>
<dbReference type="eggNOG" id="COG0761">
    <property type="taxonomic scope" value="Bacteria"/>
</dbReference>
<dbReference type="HOGENOM" id="CLU_027486_1_0_6"/>
<dbReference type="UniPathway" id="UPA00056">
    <property type="reaction ID" value="UER00097"/>
</dbReference>
<dbReference type="UniPathway" id="UPA00059">
    <property type="reaction ID" value="UER00105"/>
</dbReference>
<dbReference type="Proteomes" id="UP000000584">
    <property type="component" value="Chromosome 1"/>
</dbReference>
<dbReference type="GO" id="GO:0005829">
    <property type="term" value="C:cytosol"/>
    <property type="evidence" value="ECO:0000318"/>
    <property type="project" value="GO_Central"/>
</dbReference>
<dbReference type="GO" id="GO:0051539">
    <property type="term" value="F:4 iron, 4 sulfur cluster binding"/>
    <property type="evidence" value="ECO:0007669"/>
    <property type="project" value="UniProtKB-UniRule"/>
</dbReference>
<dbReference type="GO" id="GO:0051745">
    <property type="term" value="F:4-hydroxy-3-methylbut-2-enyl diphosphate reductase activity"/>
    <property type="evidence" value="ECO:0000318"/>
    <property type="project" value="GO_Central"/>
</dbReference>
<dbReference type="GO" id="GO:0046872">
    <property type="term" value="F:metal ion binding"/>
    <property type="evidence" value="ECO:0007669"/>
    <property type="project" value="UniProtKB-KW"/>
</dbReference>
<dbReference type="GO" id="GO:0050992">
    <property type="term" value="P:dimethylallyl diphosphate biosynthetic process"/>
    <property type="evidence" value="ECO:0007669"/>
    <property type="project" value="UniProtKB-UniRule"/>
</dbReference>
<dbReference type="GO" id="GO:0019288">
    <property type="term" value="P:isopentenyl diphosphate biosynthetic process, methylerythritol 4-phosphate pathway"/>
    <property type="evidence" value="ECO:0000318"/>
    <property type="project" value="GO_Central"/>
</dbReference>
<dbReference type="GO" id="GO:0016114">
    <property type="term" value="P:terpenoid biosynthetic process"/>
    <property type="evidence" value="ECO:0007669"/>
    <property type="project" value="UniProtKB-UniRule"/>
</dbReference>
<dbReference type="CDD" id="cd13944">
    <property type="entry name" value="lytB_ispH"/>
    <property type="match status" value="1"/>
</dbReference>
<dbReference type="Gene3D" id="3.40.50.11270">
    <property type="match status" value="1"/>
</dbReference>
<dbReference type="Gene3D" id="3.40.1010.20">
    <property type="entry name" value="4-hydroxy-3-methylbut-2-enyl diphosphate reductase, catalytic domain"/>
    <property type="match status" value="2"/>
</dbReference>
<dbReference type="HAMAP" id="MF_00191">
    <property type="entry name" value="IspH"/>
    <property type="match status" value="1"/>
</dbReference>
<dbReference type="InterPro" id="IPR003451">
    <property type="entry name" value="LytB/IspH"/>
</dbReference>
<dbReference type="NCBIfam" id="TIGR00216">
    <property type="entry name" value="ispH_lytB"/>
    <property type="match status" value="1"/>
</dbReference>
<dbReference type="NCBIfam" id="NF002188">
    <property type="entry name" value="PRK01045.1-2"/>
    <property type="match status" value="1"/>
</dbReference>
<dbReference type="NCBIfam" id="NF002190">
    <property type="entry name" value="PRK01045.1-4"/>
    <property type="match status" value="1"/>
</dbReference>
<dbReference type="PANTHER" id="PTHR30426">
    <property type="entry name" value="4-HYDROXY-3-METHYLBUT-2-ENYL DIPHOSPHATE REDUCTASE"/>
    <property type="match status" value="1"/>
</dbReference>
<dbReference type="PANTHER" id="PTHR30426:SF0">
    <property type="entry name" value="4-HYDROXY-3-METHYLBUT-2-ENYL DIPHOSPHATE REDUCTASE"/>
    <property type="match status" value="1"/>
</dbReference>
<dbReference type="Pfam" id="PF02401">
    <property type="entry name" value="LYTB"/>
    <property type="match status" value="1"/>
</dbReference>